<name>BPT_RHIWR</name>
<keyword id="KW-0012">Acyltransferase</keyword>
<keyword id="KW-0963">Cytoplasm</keyword>
<keyword id="KW-1185">Reference proteome</keyword>
<keyword id="KW-0808">Transferase</keyword>
<dbReference type="EC" id="2.3.2.29" evidence="1"/>
<dbReference type="EMBL" id="CP000699">
    <property type="protein sequence ID" value="ABQ68752.1"/>
    <property type="molecule type" value="Genomic_DNA"/>
</dbReference>
<dbReference type="SMR" id="A5V8Y6"/>
<dbReference type="STRING" id="392499.Swit_2393"/>
<dbReference type="PaxDb" id="392499-Swit_2393"/>
<dbReference type="KEGG" id="swi:Swit_2393"/>
<dbReference type="eggNOG" id="COG2935">
    <property type="taxonomic scope" value="Bacteria"/>
</dbReference>
<dbReference type="HOGENOM" id="CLU_077607_1_0_5"/>
<dbReference type="OrthoDB" id="9782022at2"/>
<dbReference type="Proteomes" id="UP000001989">
    <property type="component" value="Chromosome"/>
</dbReference>
<dbReference type="GO" id="GO:0005737">
    <property type="term" value="C:cytoplasm"/>
    <property type="evidence" value="ECO:0007669"/>
    <property type="project" value="UniProtKB-SubCell"/>
</dbReference>
<dbReference type="GO" id="GO:0004057">
    <property type="term" value="F:arginyl-tRNA--protein transferase activity"/>
    <property type="evidence" value="ECO:0007669"/>
    <property type="project" value="InterPro"/>
</dbReference>
<dbReference type="GO" id="GO:0008914">
    <property type="term" value="F:leucyl-tRNA--protein transferase activity"/>
    <property type="evidence" value="ECO:0007669"/>
    <property type="project" value="UniProtKB-UniRule"/>
</dbReference>
<dbReference type="GO" id="GO:0071596">
    <property type="term" value="P:ubiquitin-dependent protein catabolic process via the N-end rule pathway"/>
    <property type="evidence" value="ECO:0007669"/>
    <property type="project" value="InterPro"/>
</dbReference>
<dbReference type="HAMAP" id="MF_00689">
    <property type="entry name" value="Bpt"/>
    <property type="match status" value="1"/>
</dbReference>
<dbReference type="InterPro" id="IPR016181">
    <property type="entry name" value="Acyl_CoA_acyltransferase"/>
</dbReference>
<dbReference type="InterPro" id="IPR017138">
    <property type="entry name" value="Asp_Glu_LeuTrfase"/>
</dbReference>
<dbReference type="InterPro" id="IPR030700">
    <property type="entry name" value="N-end_Aminoacyl_Trfase"/>
</dbReference>
<dbReference type="InterPro" id="IPR007472">
    <property type="entry name" value="N-end_Aminoacyl_Trfase_C"/>
</dbReference>
<dbReference type="InterPro" id="IPR007471">
    <property type="entry name" value="N-end_Aminoacyl_Trfase_N"/>
</dbReference>
<dbReference type="NCBIfam" id="NF002343">
    <property type="entry name" value="PRK01305.1-4"/>
    <property type="match status" value="1"/>
</dbReference>
<dbReference type="NCBIfam" id="NF002346">
    <property type="entry name" value="PRK01305.2-3"/>
    <property type="match status" value="1"/>
</dbReference>
<dbReference type="PANTHER" id="PTHR21367">
    <property type="entry name" value="ARGININE-TRNA-PROTEIN TRANSFERASE 1"/>
    <property type="match status" value="1"/>
</dbReference>
<dbReference type="PANTHER" id="PTHR21367:SF1">
    <property type="entry name" value="ARGINYL-TRNA--PROTEIN TRANSFERASE 1"/>
    <property type="match status" value="1"/>
</dbReference>
<dbReference type="Pfam" id="PF04377">
    <property type="entry name" value="ATE_C"/>
    <property type="match status" value="1"/>
</dbReference>
<dbReference type="Pfam" id="PF04376">
    <property type="entry name" value="ATE_N"/>
    <property type="match status" value="1"/>
</dbReference>
<dbReference type="PIRSF" id="PIRSF037208">
    <property type="entry name" value="ATE_pro_prd"/>
    <property type="match status" value="1"/>
</dbReference>
<dbReference type="SUPFAM" id="SSF55729">
    <property type="entry name" value="Acyl-CoA N-acyltransferases (Nat)"/>
    <property type="match status" value="1"/>
</dbReference>
<protein>
    <recommendedName>
        <fullName evidence="1">Aspartate/glutamate leucyltransferase</fullName>
        <ecNumber evidence="1">2.3.2.29</ecNumber>
    </recommendedName>
</protein>
<reference key="1">
    <citation type="journal article" date="2010" name="J. Bacteriol.">
        <title>Genome sequence of the dioxin-mineralizing bacterium Sphingomonas wittichii RW1.</title>
        <authorList>
            <person name="Miller T.R."/>
            <person name="Delcher A.L."/>
            <person name="Salzberg S.L."/>
            <person name="Saunders E."/>
            <person name="Detter J.C."/>
            <person name="Halden R.U."/>
        </authorList>
    </citation>
    <scope>NUCLEOTIDE SEQUENCE [LARGE SCALE GENOMIC DNA]</scope>
    <source>
        <strain>DSM 6014 / CCUG 31198 / JCM 15750 / NBRC 105917 / EY 4224 / RW1</strain>
    </source>
</reference>
<gene>
    <name evidence="1" type="primary">bpt</name>
    <name type="ordered locus">Swit_2393</name>
</gene>
<proteinExistence type="inferred from homology"/>
<sequence length="266" mass="29636">MTAQFRFPRFFVTTPGPCPYLAGRTERKVFTELSGPNAAELNDALGRIGFRRSQGVAYRPTCVDCQACVSVRVVANEFRPNASQRKLIRRHADLDISVCKPWTTEEQFALLRRYLKARHPGGGMAQMDELDFADMVEQTPVKTHVVEYREPATNGRPGKLVGACLTDTQSDGVSMVYSFFETEDDSRPGLGTFIILEHIRRAAEGGLPYVYLGYWVEGSARMQYKTRFQPLERLSAGGWHRFEAPPLPAEGTGAGFPAPSKLGQLI</sequence>
<comment type="function">
    <text evidence="1">Functions in the N-end rule pathway of protein degradation where it conjugates Leu from its aminoacyl-tRNA to the N-termini of proteins containing an N-terminal aspartate or glutamate.</text>
</comment>
<comment type="catalytic activity">
    <reaction evidence="1">
        <text>N-terminal L-glutamyl-[protein] + L-leucyl-tRNA(Leu) = N-terminal L-leucyl-L-glutamyl-[protein] + tRNA(Leu) + H(+)</text>
        <dbReference type="Rhea" id="RHEA:50412"/>
        <dbReference type="Rhea" id="RHEA-COMP:9613"/>
        <dbReference type="Rhea" id="RHEA-COMP:9622"/>
        <dbReference type="Rhea" id="RHEA-COMP:12664"/>
        <dbReference type="Rhea" id="RHEA-COMP:12668"/>
        <dbReference type="ChEBI" id="CHEBI:15378"/>
        <dbReference type="ChEBI" id="CHEBI:64721"/>
        <dbReference type="ChEBI" id="CHEBI:78442"/>
        <dbReference type="ChEBI" id="CHEBI:78494"/>
        <dbReference type="ChEBI" id="CHEBI:133041"/>
        <dbReference type="EC" id="2.3.2.29"/>
    </reaction>
</comment>
<comment type="catalytic activity">
    <reaction evidence="1">
        <text>N-terminal L-aspartyl-[protein] + L-leucyl-tRNA(Leu) = N-terminal L-leucyl-L-aspartyl-[protein] + tRNA(Leu) + H(+)</text>
        <dbReference type="Rhea" id="RHEA:50420"/>
        <dbReference type="Rhea" id="RHEA-COMP:9613"/>
        <dbReference type="Rhea" id="RHEA-COMP:9622"/>
        <dbReference type="Rhea" id="RHEA-COMP:12669"/>
        <dbReference type="Rhea" id="RHEA-COMP:12674"/>
        <dbReference type="ChEBI" id="CHEBI:15378"/>
        <dbReference type="ChEBI" id="CHEBI:64720"/>
        <dbReference type="ChEBI" id="CHEBI:78442"/>
        <dbReference type="ChEBI" id="CHEBI:78494"/>
        <dbReference type="ChEBI" id="CHEBI:133042"/>
        <dbReference type="EC" id="2.3.2.29"/>
    </reaction>
</comment>
<comment type="subcellular location">
    <subcellularLocation>
        <location evidence="1">Cytoplasm</location>
    </subcellularLocation>
</comment>
<comment type="similarity">
    <text evidence="1">Belongs to the R-transferase family. Bpt subfamily.</text>
</comment>
<organism>
    <name type="scientific">Rhizorhabdus wittichii (strain DSM 6014 / CCUG 31198 / JCM 15750 / NBRC 105917 / EY 4224 / RW1)</name>
    <name type="common">Sphingomonas wittichii</name>
    <dbReference type="NCBI Taxonomy" id="392499"/>
    <lineage>
        <taxon>Bacteria</taxon>
        <taxon>Pseudomonadati</taxon>
        <taxon>Pseudomonadota</taxon>
        <taxon>Alphaproteobacteria</taxon>
        <taxon>Sphingomonadales</taxon>
        <taxon>Sphingomonadaceae</taxon>
        <taxon>Rhizorhabdus</taxon>
    </lineage>
</organism>
<feature type="chain" id="PRO_1000045153" description="Aspartate/glutamate leucyltransferase">
    <location>
        <begin position="1"/>
        <end position="266"/>
    </location>
</feature>
<accession>A5V8Y6</accession>
<evidence type="ECO:0000255" key="1">
    <source>
        <dbReference type="HAMAP-Rule" id="MF_00689"/>
    </source>
</evidence>